<protein>
    <recommendedName>
        <fullName>Uncharacterized protein MG286 homolog</fullName>
    </recommendedName>
</protein>
<sequence>MIFSISKRKLICGFSLVALTIAGIVGGVYLVTKNNQQTTPQTNHFNVADPVNKVPNWRKLGPETQRELRDLLYPLDDTGYFIYKYGAISRYLQSQKELDELVDYRTVLPSTQKHFKYDSFNQSVLESKLRKWLMKAIKQHPYFQHFEFDPVLKAQYNINIPAQKITVNAVWFYKKDNDLTTGKPIRYWDQFEIKLKQ</sequence>
<comment type="subcellular location">
    <subcellularLocation>
        <location evidence="2">Membrane</location>
        <topology evidence="2">Single-pass membrane protein</topology>
    </subcellularLocation>
</comment>
<feature type="chain" id="PRO_0000210515" description="Uncharacterized protein MG286 homolog">
    <location>
        <begin position="1"/>
        <end position="197"/>
    </location>
</feature>
<feature type="transmembrane region" description="Helical" evidence="1">
    <location>
        <begin position="11"/>
        <end position="31"/>
    </location>
</feature>
<gene>
    <name type="ordered locus">MPN_405</name>
    <name type="ORF">F11_orf197</name>
    <name type="ORF">MP433</name>
</gene>
<proteinExistence type="predicted"/>
<accession>P75379</accession>
<organism>
    <name type="scientific">Mycoplasma pneumoniae (strain ATCC 29342 / M129 / Subtype 1)</name>
    <name type="common">Mycoplasmoides pneumoniae</name>
    <dbReference type="NCBI Taxonomy" id="272634"/>
    <lineage>
        <taxon>Bacteria</taxon>
        <taxon>Bacillati</taxon>
        <taxon>Mycoplasmatota</taxon>
        <taxon>Mycoplasmoidales</taxon>
        <taxon>Mycoplasmoidaceae</taxon>
        <taxon>Mycoplasmoides</taxon>
    </lineage>
</organism>
<reference key="1">
    <citation type="journal article" date="1996" name="Nucleic Acids Res.">
        <title>Complete sequence analysis of the genome of the bacterium Mycoplasma pneumoniae.</title>
        <authorList>
            <person name="Himmelreich R."/>
            <person name="Hilbert H."/>
            <person name="Plagens H."/>
            <person name="Pirkl E."/>
            <person name="Li B.-C."/>
            <person name="Herrmann R."/>
        </authorList>
    </citation>
    <scope>NUCLEOTIDE SEQUENCE [LARGE SCALE GENOMIC DNA]</scope>
    <source>
        <strain>ATCC 29342 / M129 / Subtype 1</strain>
    </source>
</reference>
<dbReference type="EMBL" id="U00089">
    <property type="protein sequence ID" value="AAB96081.1"/>
    <property type="molecule type" value="Genomic_DNA"/>
</dbReference>
<dbReference type="PIR" id="S73759">
    <property type="entry name" value="S73759"/>
</dbReference>
<dbReference type="RefSeq" id="NP_110093.1">
    <property type="nucleotide sequence ID" value="NC_000912.1"/>
</dbReference>
<dbReference type="RefSeq" id="WP_010874761.1">
    <property type="nucleotide sequence ID" value="NZ_OU342337.1"/>
</dbReference>
<dbReference type="STRING" id="272634.MPN_405"/>
<dbReference type="EnsemblBacteria" id="AAB96081">
    <property type="protein sequence ID" value="AAB96081"/>
    <property type="gene ID" value="MPN_405"/>
</dbReference>
<dbReference type="KEGG" id="mpn:MPN_405"/>
<dbReference type="PATRIC" id="fig|272634.6.peg.438"/>
<dbReference type="HOGENOM" id="CLU_1388879_0_0_14"/>
<dbReference type="OrthoDB" id="9925077at2"/>
<dbReference type="BioCyc" id="MPNE272634:G1GJ3-649-MONOMER"/>
<dbReference type="Proteomes" id="UP000000808">
    <property type="component" value="Chromosome"/>
</dbReference>
<dbReference type="GO" id="GO:0016020">
    <property type="term" value="C:membrane"/>
    <property type="evidence" value="ECO:0007669"/>
    <property type="project" value="UniProtKB-SubCell"/>
</dbReference>
<dbReference type="InterPro" id="IPR035219">
    <property type="entry name" value="DUF5452"/>
</dbReference>
<dbReference type="Pfam" id="PF17533">
    <property type="entry name" value="DUF5452"/>
    <property type="match status" value="1"/>
</dbReference>
<name>Y405_MYCPN</name>
<keyword id="KW-0472">Membrane</keyword>
<keyword id="KW-1185">Reference proteome</keyword>
<keyword id="KW-0812">Transmembrane</keyword>
<keyword id="KW-1133">Transmembrane helix</keyword>
<evidence type="ECO:0000255" key="1"/>
<evidence type="ECO:0000305" key="2"/>